<accession>Q8K9L1</accession>
<proteinExistence type="inferred from homology"/>
<dbReference type="EMBL" id="AE013218">
    <property type="protein sequence ID" value="AAM67877.1"/>
    <property type="molecule type" value="Genomic_DNA"/>
</dbReference>
<dbReference type="RefSeq" id="WP_011053844.1">
    <property type="nucleotide sequence ID" value="NC_004061.1"/>
</dbReference>
<dbReference type="SMR" id="Q8K9L1"/>
<dbReference type="STRING" id="198804.BUsg_323"/>
<dbReference type="GeneID" id="93003794"/>
<dbReference type="KEGG" id="bas:BUsg_323"/>
<dbReference type="eggNOG" id="COG3418">
    <property type="taxonomic scope" value="Bacteria"/>
</dbReference>
<dbReference type="HOGENOM" id="CLU_1881778_0_0_6"/>
<dbReference type="Proteomes" id="UP000000416">
    <property type="component" value="Chromosome"/>
</dbReference>
<dbReference type="GO" id="GO:0005737">
    <property type="term" value="C:cytoplasm"/>
    <property type="evidence" value="ECO:0007669"/>
    <property type="project" value="UniProtKB-SubCell"/>
</dbReference>
<dbReference type="GO" id="GO:0044780">
    <property type="term" value="P:bacterial-type flagellum assembly"/>
    <property type="evidence" value="ECO:0007669"/>
    <property type="project" value="InterPro"/>
</dbReference>
<dbReference type="InterPro" id="IPR007809">
    <property type="entry name" value="FlgN-like"/>
</dbReference>
<dbReference type="InterPro" id="IPR036679">
    <property type="entry name" value="FlgN-like_sf"/>
</dbReference>
<dbReference type="Pfam" id="PF05130">
    <property type="entry name" value="FlgN"/>
    <property type="match status" value="1"/>
</dbReference>
<dbReference type="SUPFAM" id="SSF140566">
    <property type="entry name" value="FlgN-like"/>
    <property type="match status" value="1"/>
</dbReference>
<feature type="chain" id="PRO_0000180866" description="Putative flagella synthesis protein FlgN">
    <location>
        <begin position="1"/>
        <end position="138"/>
    </location>
</feature>
<name>FLGN_BUCAP</name>
<comment type="function">
    <text evidence="1">Required for the efficient initiation of filament assembly.</text>
</comment>
<comment type="subcellular location">
    <subcellularLocation>
        <location evidence="2">Cytoplasm</location>
    </subcellularLocation>
</comment>
<comment type="similarity">
    <text evidence="2">Belongs to the FlgN family.</text>
</comment>
<evidence type="ECO:0000250" key="1"/>
<evidence type="ECO:0000305" key="2"/>
<gene>
    <name type="primary">flgN</name>
    <name type="ordered locus">BUsg_323</name>
</gene>
<sequence length="138" mass="16854">MKKLINIIKDIKENLMSLQNLMHQEYDNLLKSKINIKKIKLIIEEKEFFLRKIASLKKEKSFLEKRYNIFPPYLQFNELNLHWDEIISICFLLKKKNIKNKIILNEKFYLNQRFLNTFQKYRLNQNNTTYGVDGHLEN</sequence>
<organism>
    <name type="scientific">Buchnera aphidicola subsp. Schizaphis graminum (strain Sg)</name>
    <dbReference type="NCBI Taxonomy" id="198804"/>
    <lineage>
        <taxon>Bacteria</taxon>
        <taxon>Pseudomonadati</taxon>
        <taxon>Pseudomonadota</taxon>
        <taxon>Gammaproteobacteria</taxon>
        <taxon>Enterobacterales</taxon>
        <taxon>Erwiniaceae</taxon>
        <taxon>Buchnera</taxon>
    </lineage>
</organism>
<reference key="1">
    <citation type="journal article" date="2002" name="Science">
        <title>50 million years of genomic stasis in endosymbiotic bacteria.</title>
        <authorList>
            <person name="Tamas I."/>
            <person name="Klasson L."/>
            <person name="Canbaeck B."/>
            <person name="Naeslund A.K."/>
            <person name="Eriksson A.-S."/>
            <person name="Wernegreen J.J."/>
            <person name="Sandstroem J.P."/>
            <person name="Moran N.A."/>
            <person name="Andersson S.G.E."/>
        </authorList>
    </citation>
    <scope>NUCLEOTIDE SEQUENCE [LARGE SCALE GENOMIC DNA]</scope>
    <source>
        <strain>Sg</strain>
    </source>
</reference>
<keyword id="KW-1005">Bacterial flagellum biogenesis</keyword>
<keyword id="KW-0963">Cytoplasm</keyword>
<protein>
    <recommendedName>
        <fullName>Putative flagella synthesis protein FlgN</fullName>
    </recommendedName>
</protein>